<reference key="1">
    <citation type="journal article" date="2002" name="Nature">
        <title>Genome sequence of the plant pathogen Ralstonia solanacearum.</title>
        <authorList>
            <person name="Salanoubat M."/>
            <person name="Genin S."/>
            <person name="Artiguenave F."/>
            <person name="Gouzy J."/>
            <person name="Mangenot S."/>
            <person name="Arlat M."/>
            <person name="Billault A."/>
            <person name="Brottier P."/>
            <person name="Camus J.-C."/>
            <person name="Cattolico L."/>
            <person name="Chandler M."/>
            <person name="Choisne N."/>
            <person name="Claudel-Renard C."/>
            <person name="Cunnac S."/>
            <person name="Demange N."/>
            <person name="Gaspin C."/>
            <person name="Lavie M."/>
            <person name="Moisan A."/>
            <person name="Robert C."/>
            <person name="Saurin W."/>
            <person name="Schiex T."/>
            <person name="Siguier P."/>
            <person name="Thebault P."/>
            <person name="Whalen M."/>
            <person name="Wincker P."/>
            <person name="Levy M."/>
            <person name="Weissenbach J."/>
            <person name="Boucher C.A."/>
        </authorList>
    </citation>
    <scope>NUCLEOTIDE SEQUENCE [LARGE SCALE GENOMIC DNA]</scope>
    <source>
        <strain>ATCC BAA-1114 / GMI1000</strain>
    </source>
</reference>
<name>RL36_RALN1</name>
<evidence type="ECO:0000255" key="1">
    <source>
        <dbReference type="HAMAP-Rule" id="MF_00251"/>
    </source>
</evidence>
<evidence type="ECO:0000305" key="2"/>
<accession>Q8XV34</accession>
<sequence length="38" mass="4392">MKVLASVKRICRNCKIIKRKGVVRVICSSDPRHKQRQG</sequence>
<gene>
    <name evidence="1" type="primary">rpmJ</name>
    <name type="ordered locus">RSc2997</name>
    <name type="ORF">RS01115</name>
</gene>
<keyword id="KW-1185">Reference proteome</keyword>
<keyword id="KW-0687">Ribonucleoprotein</keyword>
<keyword id="KW-0689">Ribosomal protein</keyword>
<dbReference type="EMBL" id="AL646052">
    <property type="protein sequence ID" value="CAD16706.1"/>
    <property type="molecule type" value="Genomic_DNA"/>
</dbReference>
<dbReference type="RefSeq" id="WP_003264141.1">
    <property type="nucleotide sequence ID" value="NC_003295.1"/>
</dbReference>
<dbReference type="SMR" id="Q8XV34"/>
<dbReference type="STRING" id="267608.RSc2997"/>
<dbReference type="EnsemblBacteria" id="CAD16706">
    <property type="protein sequence ID" value="CAD16706"/>
    <property type="gene ID" value="RSc2997"/>
</dbReference>
<dbReference type="GeneID" id="97319870"/>
<dbReference type="KEGG" id="rso:RSc2997"/>
<dbReference type="eggNOG" id="COG0257">
    <property type="taxonomic scope" value="Bacteria"/>
</dbReference>
<dbReference type="HOGENOM" id="CLU_135723_6_2_4"/>
<dbReference type="Proteomes" id="UP000001436">
    <property type="component" value="Chromosome"/>
</dbReference>
<dbReference type="GO" id="GO:0005737">
    <property type="term" value="C:cytoplasm"/>
    <property type="evidence" value="ECO:0007669"/>
    <property type="project" value="UniProtKB-ARBA"/>
</dbReference>
<dbReference type="GO" id="GO:1990904">
    <property type="term" value="C:ribonucleoprotein complex"/>
    <property type="evidence" value="ECO:0007669"/>
    <property type="project" value="UniProtKB-KW"/>
</dbReference>
<dbReference type="GO" id="GO:0005840">
    <property type="term" value="C:ribosome"/>
    <property type="evidence" value="ECO:0007669"/>
    <property type="project" value="UniProtKB-KW"/>
</dbReference>
<dbReference type="GO" id="GO:0003735">
    <property type="term" value="F:structural constituent of ribosome"/>
    <property type="evidence" value="ECO:0007669"/>
    <property type="project" value="InterPro"/>
</dbReference>
<dbReference type="GO" id="GO:0006412">
    <property type="term" value="P:translation"/>
    <property type="evidence" value="ECO:0007669"/>
    <property type="project" value="UniProtKB-UniRule"/>
</dbReference>
<dbReference type="HAMAP" id="MF_00251">
    <property type="entry name" value="Ribosomal_bL36"/>
    <property type="match status" value="1"/>
</dbReference>
<dbReference type="InterPro" id="IPR000473">
    <property type="entry name" value="Ribosomal_bL36"/>
</dbReference>
<dbReference type="InterPro" id="IPR035977">
    <property type="entry name" value="Ribosomal_bL36_sp"/>
</dbReference>
<dbReference type="NCBIfam" id="TIGR01022">
    <property type="entry name" value="rpmJ_bact"/>
    <property type="match status" value="1"/>
</dbReference>
<dbReference type="PANTHER" id="PTHR42888">
    <property type="entry name" value="50S RIBOSOMAL PROTEIN L36, CHLOROPLASTIC"/>
    <property type="match status" value="1"/>
</dbReference>
<dbReference type="PANTHER" id="PTHR42888:SF1">
    <property type="entry name" value="LARGE RIBOSOMAL SUBUNIT PROTEIN BL36C"/>
    <property type="match status" value="1"/>
</dbReference>
<dbReference type="Pfam" id="PF00444">
    <property type="entry name" value="Ribosomal_L36"/>
    <property type="match status" value="1"/>
</dbReference>
<dbReference type="SUPFAM" id="SSF57840">
    <property type="entry name" value="Ribosomal protein L36"/>
    <property type="match status" value="1"/>
</dbReference>
<dbReference type="PROSITE" id="PS00828">
    <property type="entry name" value="RIBOSOMAL_L36"/>
    <property type="match status" value="1"/>
</dbReference>
<feature type="chain" id="PRO_0000126243" description="Large ribosomal subunit protein bL36">
    <location>
        <begin position="1"/>
        <end position="38"/>
    </location>
</feature>
<organism>
    <name type="scientific">Ralstonia nicotianae (strain ATCC BAA-1114 / GMI1000)</name>
    <name type="common">Ralstonia solanacearum</name>
    <dbReference type="NCBI Taxonomy" id="267608"/>
    <lineage>
        <taxon>Bacteria</taxon>
        <taxon>Pseudomonadati</taxon>
        <taxon>Pseudomonadota</taxon>
        <taxon>Betaproteobacteria</taxon>
        <taxon>Burkholderiales</taxon>
        <taxon>Burkholderiaceae</taxon>
        <taxon>Ralstonia</taxon>
        <taxon>Ralstonia solanacearum species complex</taxon>
    </lineage>
</organism>
<protein>
    <recommendedName>
        <fullName evidence="1">Large ribosomal subunit protein bL36</fullName>
    </recommendedName>
    <alternativeName>
        <fullName evidence="2">50S ribosomal protein L36</fullName>
    </alternativeName>
</protein>
<comment type="similarity">
    <text evidence="1">Belongs to the bacterial ribosomal protein bL36 family.</text>
</comment>
<proteinExistence type="inferred from homology"/>